<comment type="subcellular location">
    <subcellularLocation>
        <location evidence="1">Nucleus</location>
    </subcellularLocation>
</comment>
<comment type="similarity">
    <text evidence="3">Belongs to the bZIP family. NFIL3 subfamily.</text>
</comment>
<feature type="chain" id="PRO_0000450365" description="NFIL3 like protein">
    <location>
        <begin position="1"/>
        <end position="289"/>
    </location>
</feature>
<feature type="domain" description="bZIP" evidence="1">
    <location>
        <begin position="42"/>
        <end position="105"/>
    </location>
</feature>
<feature type="region of interest" description="Disordered" evidence="2">
    <location>
        <begin position="1"/>
        <end position="27"/>
    </location>
</feature>
<feature type="region of interest" description="Basic motif" evidence="1">
    <location>
        <begin position="48"/>
        <end position="64"/>
    </location>
</feature>
<feature type="region of interest" description="Leucine-zipper" evidence="1">
    <location>
        <begin position="70"/>
        <end position="91"/>
    </location>
</feature>
<reference key="1">
    <citation type="journal article" date="2004" name="Nature">
        <title>The DNA sequence and biology of human chromosome 19.</title>
        <authorList>
            <person name="Grimwood J."/>
            <person name="Gordon L.A."/>
            <person name="Olsen A.S."/>
            <person name="Terry A."/>
            <person name="Schmutz J."/>
            <person name="Lamerdin J.E."/>
            <person name="Hellsten U."/>
            <person name="Goodstein D."/>
            <person name="Couronne O."/>
            <person name="Tran-Gyamfi M."/>
            <person name="Aerts A."/>
            <person name="Altherr M."/>
            <person name="Ashworth L."/>
            <person name="Bajorek E."/>
            <person name="Black S."/>
            <person name="Branscomb E."/>
            <person name="Caenepeel S."/>
            <person name="Carrano A.V."/>
            <person name="Caoile C."/>
            <person name="Chan Y.M."/>
            <person name="Christensen M."/>
            <person name="Cleland C.A."/>
            <person name="Copeland A."/>
            <person name="Dalin E."/>
            <person name="Dehal P."/>
            <person name="Denys M."/>
            <person name="Detter J.C."/>
            <person name="Escobar J."/>
            <person name="Flowers D."/>
            <person name="Fotopulos D."/>
            <person name="Garcia C."/>
            <person name="Georgescu A.M."/>
            <person name="Glavina T."/>
            <person name="Gomez M."/>
            <person name="Gonzales E."/>
            <person name="Groza M."/>
            <person name="Hammon N."/>
            <person name="Hawkins T."/>
            <person name="Haydu L."/>
            <person name="Ho I."/>
            <person name="Huang W."/>
            <person name="Israni S."/>
            <person name="Jett J."/>
            <person name="Kadner K."/>
            <person name="Kimball H."/>
            <person name="Kobayashi A."/>
            <person name="Larionov V."/>
            <person name="Leem S.-H."/>
            <person name="Lopez F."/>
            <person name="Lou Y."/>
            <person name="Lowry S."/>
            <person name="Malfatti S."/>
            <person name="Martinez D."/>
            <person name="McCready P.M."/>
            <person name="Medina C."/>
            <person name="Morgan J."/>
            <person name="Nelson K."/>
            <person name="Nolan M."/>
            <person name="Ovcharenko I."/>
            <person name="Pitluck S."/>
            <person name="Pollard M."/>
            <person name="Popkie A.P."/>
            <person name="Predki P."/>
            <person name="Quan G."/>
            <person name="Ramirez L."/>
            <person name="Rash S."/>
            <person name="Retterer J."/>
            <person name="Rodriguez A."/>
            <person name="Rogers S."/>
            <person name="Salamov A."/>
            <person name="Salazar A."/>
            <person name="She X."/>
            <person name="Smith D."/>
            <person name="Slezak T."/>
            <person name="Solovyev V."/>
            <person name="Thayer N."/>
            <person name="Tice H."/>
            <person name="Tsai M."/>
            <person name="Ustaszewska A."/>
            <person name="Vo N."/>
            <person name="Wagner M."/>
            <person name="Wheeler J."/>
            <person name="Wu K."/>
            <person name="Xie G."/>
            <person name="Yang J."/>
            <person name="Dubchak I."/>
            <person name="Furey T.S."/>
            <person name="DeJong P."/>
            <person name="Dickson M."/>
            <person name="Gordon D."/>
            <person name="Eichler E.E."/>
            <person name="Pennacchio L.A."/>
            <person name="Richardson P."/>
            <person name="Stubbs L."/>
            <person name="Rokhsar D.S."/>
            <person name="Myers R.M."/>
            <person name="Rubin E.M."/>
            <person name="Lucas S.M."/>
        </authorList>
    </citation>
    <scope>NUCLEOTIDE SEQUENCE [LARGE SCALE GENOMIC DNA]</scope>
</reference>
<keyword id="KW-0238">DNA-binding</keyword>
<keyword id="KW-0539">Nucleus</keyword>
<keyword id="KW-1267">Proteomics identification</keyword>
<keyword id="KW-1185">Reference proteome</keyword>
<keyword id="KW-0804">Transcription</keyword>
<keyword id="KW-0805">Transcription regulation</keyword>
<protein>
    <recommendedName>
        <fullName evidence="3">NFIL3 like protein</fullName>
    </recommendedName>
    <alternativeName>
        <fullName evidence="4">NFIL3 like basic leucine zipper</fullName>
    </alternativeName>
</protein>
<accession>A0A5F9ZHS7</accession>
<organism>
    <name type="scientific">Homo sapiens</name>
    <name type="common">Human</name>
    <dbReference type="NCBI Taxonomy" id="9606"/>
    <lineage>
        <taxon>Eukaryota</taxon>
        <taxon>Metazoa</taxon>
        <taxon>Chordata</taxon>
        <taxon>Craniata</taxon>
        <taxon>Vertebrata</taxon>
        <taxon>Euteleostomi</taxon>
        <taxon>Mammalia</taxon>
        <taxon>Eutheria</taxon>
        <taxon>Euarchontoglires</taxon>
        <taxon>Primates</taxon>
        <taxon>Haplorrhini</taxon>
        <taxon>Catarrhini</taxon>
        <taxon>Hominidae</taxon>
        <taxon>Homo</taxon>
    </lineage>
</organism>
<proteinExistence type="evidence at protein level"/>
<dbReference type="EMBL" id="AC243312">
    <property type="status" value="NOT_ANNOTATED_CDS"/>
    <property type="molecule type" value="Genomic_DNA"/>
</dbReference>
<dbReference type="CCDS" id="CCDS92505.1"/>
<dbReference type="RefSeq" id="NP_001365528.1">
    <property type="nucleotide sequence ID" value="NM_001378599.1"/>
</dbReference>
<dbReference type="RefSeq" id="NP_001365529.1">
    <property type="nucleotide sequence ID" value="NM_001378600.1"/>
</dbReference>
<dbReference type="RefSeq" id="NP_001365530.1">
    <property type="nucleotide sequence ID" value="NM_001378601.1"/>
</dbReference>
<dbReference type="RefSeq" id="XP_016855268.1">
    <property type="nucleotide sequence ID" value="XM_016999779.1"/>
</dbReference>
<dbReference type="RefSeq" id="XP_016883059.1">
    <property type="nucleotide sequence ID" value="XM_017027570.1"/>
</dbReference>
<dbReference type="SMR" id="A0A5F9ZHS7"/>
<dbReference type="FunCoup" id="A0A5F9ZHS7">
    <property type="interactions" value="159"/>
</dbReference>
<dbReference type="STRING" id="9606.ENSP00000499970"/>
<dbReference type="PeptideAtlas" id="A0A5F9ZHS7"/>
<dbReference type="Ensembl" id="ENST00000570582.4">
    <property type="protein sequence ID" value="ENSP00000500121.1"/>
    <property type="gene ID" value="ENSG00000268480.4"/>
</dbReference>
<dbReference type="Ensembl" id="ENST00000671902.2">
    <property type="protein sequence ID" value="ENSP00000500604.1"/>
    <property type="gene ID" value="ENSG00000268480.4"/>
</dbReference>
<dbReference type="Ensembl" id="ENST00000673603.2">
    <property type="protein sequence ID" value="ENSP00000499970.1"/>
    <property type="gene ID" value="ENSG00000268480.4"/>
</dbReference>
<dbReference type="Ensembl" id="ENST00000691075.1">
    <property type="protein sequence ID" value="ENSP00000509575.1"/>
    <property type="gene ID" value="ENSG00000268480.4"/>
</dbReference>
<dbReference type="GeneID" id="105372267"/>
<dbReference type="MANE-Select" id="ENST00000691075.1">
    <property type="protein sequence ID" value="ENSP00000509575.1"/>
    <property type="RefSeq nucleotide sequence ID" value="NM_001378600.1"/>
    <property type="RefSeq protein sequence ID" value="NP_001365529.1"/>
</dbReference>
<dbReference type="AGR" id="HGNC:52681"/>
<dbReference type="GeneCards" id="NFILZ"/>
<dbReference type="HGNC" id="HGNC:52681">
    <property type="gene designation" value="NFILZ"/>
</dbReference>
<dbReference type="HPA" id="ENSG00000268480">
    <property type="expression patterns" value="Tissue enhanced (testis)"/>
</dbReference>
<dbReference type="neXtProt" id="NX_A0A5F9ZHS7"/>
<dbReference type="VEuPathDB" id="HostDB:ENSG00000268480"/>
<dbReference type="GeneTree" id="ENSGT00940000164108"/>
<dbReference type="InParanoid" id="A0A5F9ZHS7"/>
<dbReference type="OMA" id="CHLLDGH"/>
<dbReference type="OrthoDB" id="6151507at2759"/>
<dbReference type="PRO" id="PR:A0A5F9ZHS7"/>
<dbReference type="Proteomes" id="UP000005640">
    <property type="component" value="Chromosome 19"/>
</dbReference>
<dbReference type="Bgee" id="ENSG00000268480">
    <property type="expression patterns" value="Expressed in thymus and 42 other cell types or tissues"/>
</dbReference>
<dbReference type="GO" id="GO:0005634">
    <property type="term" value="C:nucleus"/>
    <property type="evidence" value="ECO:0000318"/>
    <property type="project" value="GO_Central"/>
</dbReference>
<dbReference type="GO" id="GO:0003677">
    <property type="term" value="F:DNA binding"/>
    <property type="evidence" value="ECO:0007669"/>
    <property type="project" value="UniProtKB-KW"/>
</dbReference>
<dbReference type="GO" id="GO:0003700">
    <property type="term" value="F:DNA-binding transcription factor activity"/>
    <property type="evidence" value="ECO:0007669"/>
    <property type="project" value="InterPro"/>
</dbReference>
<dbReference type="GO" id="GO:0007623">
    <property type="term" value="P:circadian rhythm"/>
    <property type="evidence" value="ECO:0000318"/>
    <property type="project" value="GO_Central"/>
</dbReference>
<dbReference type="GO" id="GO:0006355">
    <property type="term" value="P:regulation of DNA-templated transcription"/>
    <property type="evidence" value="ECO:0000318"/>
    <property type="project" value="GO_Central"/>
</dbReference>
<dbReference type="CDD" id="cd14694">
    <property type="entry name" value="bZIP_NFIL3"/>
    <property type="match status" value="1"/>
</dbReference>
<dbReference type="FunFam" id="1.20.5.170:FF:000025">
    <property type="entry name" value="nuclear factor interleukin-3-regulated protein-like"/>
    <property type="match status" value="1"/>
</dbReference>
<dbReference type="Gene3D" id="1.20.5.170">
    <property type="match status" value="1"/>
</dbReference>
<dbReference type="InterPro" id="IPR004827">
    <property type="entry name" value="bZIP"/>
</dbReference>
<dbReference type="InterPro" id="IPR046347">
    <property type="entry name" value="bZIP_sf"/>
</dbReference>
<dbReference type="InterPro" id="IPR047229">
    <property type="entry name" value="NFIL3-like"/>
</dbReference>
<dbReference type="InterPro" id="IPR047106">
    <property type="entry name" value="NFIL3-like_bZIP"/>
</dbReference>
<dbReference type="PANTHER" id="PTHR15284:SF7">
    <property type="entry name" value="NFIL3 LIKE PROTEIN"/>
    <property type="match status" value="1"/>
</dbReference>
<dbReference type="PANTHER" id="PTHR15284">
    <property type="entry name" value="NUCLEAR FACTOR INTERLEUKIN-3-REGULATED PROTEIN"/>
    <property type="match status" value="1"/>
</dbReference>
<dbReference type="Pfam" id="PF07716">
    <property type="entry name" value="bZIP_2"/>
    <property type="match status" value="1"/>
</dbReference>
<dbReference type="SMART" id="SM00338">
    <property type="entry name" value="BRLZ"/>
    <property type="match status" value="1"/>
</dbReference>
<dbReference type="SUPFAM" id="SSF57959">
    <property type="entry name" value="Leucine zipper domain"/>
    <property type="match status" value="1"/>
</dbReference>
<dbReference type="PROSITE" id="PS50217">
    <property type="entry name" value="BZIP"/>
    <property type="match status" value="1"/>
</dbReference>
<dbReference type="PROSITE" id="PS00036">
    <property type="entry name" value="BZIP_BASIC"/>
    <property type="match status" value="1"/>
</dbReference>
<sequence length="289" mass="31047">MDVGFSGLPDVSQSHSKTLWGARGRGPSIRRQREFMPEEKKDTVYWEKRRKNNEAAKRSREKRRLNDAAIEGRLAALMEENALLKGELKALKLRFGLLPLTGGPRALPLQALLLEAPWTGDPRPGAEALSSLSGSHSCLLRPRSLDAGIPGCRGCLLAPRWTGLATSPRSPQESASPTLNRIDMALQTALPPALFSCHLLEGHVGSRPELRPCWGLWSPVPSGCRASGPSDVLLTPTADPMGLSPGVTCPAPGNSPEGLGQPSLPHKLRIKSRASGRVPRGWEGGQAPL</sequence>
<gene>
    <name evidence="4" type="primary">NFILZ</name>
</gene>
<name>NFILZ_HUMAN</name>
<evidence type="ECO:0000255" key="1">
    <source>
        <dbReference type="PROSITE-ProRule" id="PRU00978"/>
    </source>
</evidence>
<evidence type="ECO:0000256" key="2">
    <source>
        <dbReference type="SAM" id="MobiDB-lite"/>
    </source>
</evidence>
<evidence type="ECO:0000305" key="3"/>
<evidence type="ECO:0000312" key="4">
    <source>
        <dbReference type="HGNC" id="HGNC:52681"/>
    </source>
</evidence>